<sequence length="420" mass="44848">MGQSPSPRSPHGSPPTLSTLTLLLLLCGQAHSQCKILRCNAEYVSSTLSLRGGGSPDTPRGGGRGGLASGGLCRALRSYALCTRRTARTCRGDLAFHSAVHGIEDLMIQHNCSRQGPTAPPPARGPALPGAGPAPLTPDPCDYEARFSRLHGRAPGFLHCASFGDPHVRSFHNQFHTCRVQGAWPLLDNDFLFVQATSSPVSSGANATTIRKITIIFKNMQECIDQKVYQAEVDNLPAAFEDGSINGGDRPGGSSLSIQTANLGSHVEIRAAYIGTTIIIRQTAGQLSFSIRVAEDVARAFSAEQDLQLCVGGCPPSQRLSRSERNRRGAIAIDTARRLCKEGLPVEDAYFQSCVFDVSVSGDPNFTVAAQTALDDARIFLTDLENLHLFPSDAGPPLSPAICLVPLLSALFVLWLCFSK</sequence>
<dbReference type="EMBL" id="AJ557515">
    <property type="protein sequence ID" value="CAD89720.1"/>
    <property type="molecule type" value="mRNA"/>
</dbReference>
<dbReference type="EMBL" id="AK009636">
    <property type="protein sequence ID" value="BAB26407.1"/>
    <property type="molecule type" value="mRNA"/>
</dbReference>
<dbReference type="EMBL" id="AK014082">
    <property type="protein sequence ID" value="BAC25423.1"/>
    <property type="molecule type" value="mRNA"/>
</dbReference>
<dbReference type="EMBL" id="BC022603">
    <property type="protein sequence ID" value="AAH22603.1"/>
    <property type="molecule type" value="mRNA"/>
</dbReference>
<dbReference type="CCDS" id="CCDS51003.1">
    <molecule id="Q7TQ32-1"/>
</dbReference>
<dbReference type="RefSeq" id="NP_001416082.1">
    <molecule id="Q7TQ32-1"/>
    <property type="nucleotide sequence ID" value="NM_001429153.1"/>
</dbReference>
<dbReference type="RefSeq" id="NP_081402.3">
    <molecule id="Q7TQ32-1"/>
    <property type="nucleotide sequence ID" value="NM_027126.4"/>
</dbReference>
<dbReference type="RefSeq" id="XP_006502100.1">
    <property type="nucleotide sequence ID" value="XM_006502037.3"/>
</dbReference>
<dbReference type="RefSeq" id="XP_036019189.1">
    <molecule id="Q7TQ32-1"/>
    <property type="nucleotide sequence ID" value="XM_036163296.1"/>
</dbReference>
<dbReference type="SMR" id="Q7TQ32"/>
<dbReference type="BioGRID" id="213552">
    <property type="interactions" value="1"/>
</dbReference>
<dbReference type="FunCoup" id="Q7TQ32">
    <property type="interactions" value="123"/>
</dbReference>
<dbReference type="STRING" id="10090.ENSMUSP00000046659"/>
<dbReference type="GlyCosmos" id="Q7TQ32">
    <property type="glycosylation" value="3 sites, No reported glycans"/>
</dbReference>
<dbReference type="GlyGen" id="Q7TQ32">
    <property type="glycosylation" value="4 sites"/>
</dbReference>
<dbReference type="iPTMnet" id="Q7TQ32"/>
<dbReference type="PhosphoSitePlus" id="Q7TQ32"/>
<dbReference type="PaxDb" id="10090-ENSMUSP00000046659"/>
<dbReference type="Antibodypedia" id="2609">
    <property type="antibodies" value="459 antibodies from 30 providers"/>
</dbReference>
<dbReference type="DNASU" id="69585"/>
<dbReference type="Ensembl" id="ENSMUST00000049208.11">
    <molecule id="Q7TQ32-1"/>
    <property type="protein sequence ID" value="ENSMUSP00000046659.10"/>
    <property type="gene ID" value="ENSMUSG00000038403.11"/>
</dbReference>
<dbReference type="GeneID" id="69585"/>
<dbReference type="KEGG" id="mmu:69585"/>
<dbReference type="UCSC" id="uc008qna.2">
    <molecule id="Q7TQ32-1"/>
    <property type="organism name" value="mouse"/>
</dbReference>
<dbReference type="AGR" id="MGI:1916835"/>
<dbReference type="CTD" id="148738"/>
<dbReference type="MGI" id="MGI:1916835">
    <property type="gene designation" value="Hjv"/>
</dbReference>
<dbReference type="VEuPathDB" id="HostDB:ENSMUSG00000038403"/>
<dbReference type="eggNOG" id="ENOG502QWAZ">
    <property type="taxonomic scope" value="Eukaryota"/>
</dbReference>
<dbReference type="GeneTree" id="ENSGT00950000183112"/>
<dbReference type="HOGENOM" id="CLU_032775_1_1_1"/>
<dbReference type="InParanoid" id="Q7TQ32"/>
<dbReference type="OMA" id="SYQHCAA"/>
<dbReference type="OrthoDB" id="10013795at2759"/>
<dbReference type="PhylomeDB" id="Q7TQ32"/>
<dbReference type="TreeFam" id="TF329836"/>
<dbReference type="BioGRID-ORCS" id="69585">
    <property type="hits" value="1 hit in 77 CRISPR screens"/>
</dbReference>
<dbReference type="PRO" id="PR:Q7TQ32"/>
<dbReference type="Proteomes" id="UP000000589">
    <property type="component" value="Chromosome 3"/>
</dbReference>
<dbReference type="RNAct" id="Q7TQ32">
    <property type="molecule type" value="protein"/>
</dbReference>
<dbReference type="Bgee" id="ENSMUSG00000038403">
    <property type="expression patterns" value="Expressed in interventricular septum and 84 other cell types or tissues"/>
</dbReference>
<dbReference type="GO" id="GO:0070724">
    <property type="term" value="C:BMP receptor complex"/>
    <property type="evidence" value="ECO:0007669"/>
    <property type="project" value="Ensembl"/>
</dbReference>
<dbReference type="GO" id="GO:0009986">
    <property type="term" value="C:cell surface"/>
    <property type="evidence" value="ECO:0000314"/>
    <property type="project" value="MGI"/>
</dbReference>
<dbReference type="GO" id="GO:0005615">
    <property type="term" value="C:extracellular space"/>
    <property type="evidence" value="ECO:0000314"/>
    <property type="project" value="MGI"/>
</dbReference>
<dbReference type="GO" id="GO:1990712">
    <property type="term" value="C:HFE-transferrin receptor complex"/>
    <property type="evidence" value="ECO:0007669"/>
    <property type="project" value="Ensembl"/>
</dbReference>
<dbReference type="GO" id="GO:0005886">
    <property type="term" value="C:plasma membrane"/>
    <property type="evidence" value="ECO:0000266"/>
    <property type="project" value="MGI"/>
</dbReference>
<dbReference type="GO" id="GO:0098552">
    <property type="term" value="C:side of membrane"/>
    <property type="evidence" value="ECO:0007669"/>
    <property type="project" value="UniProtKB-KW"/>
</dbReference>
<dbReference type="GO" id="GO:0036122">
    <property type="term" value="F:BMP binding"/>
    <property type="evidence" value="ECO:0000314"/>
    <property type="project" value="MGI"/>
</dbReference>
<dbReference type="GO" id="GO:0098821">
    <property type="term" value="F:BMP receptor activity"/>
    <property type="evidence" value="ECO:0007669"/>
    <property type="project" value="Ensembl"/>
</dbReference>
<dbReference type="GO" id="GO:0015026">
    <property type="term" value="F:coreceptor activity"/>
    <property type="evidence" value="ECO:0000316"/>
    <property type="project" value="MGI"/>
</dbReference>
<dbReference type="GO" id="GO:1990459">
    <property type="term" value="F:transferrin receptor binding"/>
    <property type="evidence" value="ECO:0007669"/>
    <property type="project" value="Ensembl"/>
</dbReference>
<dbReference type="GO" id="GO:0032924">
    <property type="term" value="P:activin receptor signaling pathway"/>
    <property type="evidence" value="ECO:0007669"/>
    <property type="project" value="Ensembl"/>
</dbReference>
<dbReference type="GO" id="GO:0030509">
    <property type="term" value="P:BMP signaling pathway"/>
    <property type="evidence" value="ECO:0000315"/>
    <property type="project" value="MGI"/>
</dbReference>
<dbReference type="GO" id="GO:0006879">
    <property type="term" value="P:intracellular iron ion homeostasis"/>
    <property type="evidence" value="ECO:0000315"/>
    <property type="project" value="BHF-UCL"/>
</dbReference>
<dbReference type="GO" id="GO:0060586">
    <property type="term" value="P:multicellular organismal-level iron ion homeostasis"/>
    <property type="evidence" value="ECO:0000315"/>
    <property type="project" value="MGI"/>
</dbReference>
<dbReference type="GO" id="GO:0030514">
    <property type="term" value="P:negative regulation of BMP signaling pathway"/>
    <property type="evidence" value="ECO:0000316"/>
    <property type="project" value="MGI"/>
</dbReference>
<dbReference type="GO" id="GO:0000122">
    <property type="term" value="P:negative regulation of transcription by RNA polymerase II"/>
    <property type="evidence" value="ECO:0000315"/>
    <property type="project" value="BHF-UCL"/>
</dbReference>
<dbReference type="GO" id="GO:0045944">
    <property type="term" value="P:positive regulation of transcription by RNA polymerase II"/>
    <property type="evidence" value="ECO:0000314"/>
    <property type="project" value="MGI"/>
</dbReference>
<dbReference type="GO" id="GO:0016540">
    <property type="term" value="P:protein autoprocessing"/>
    <property type="evidence" value="ECO:0007669"/>
    <property type="project" value="Ensembl"/>
</dbReference>
<dbReference type="GO" id="GO:0006366">
    <property type="term" value="P:transcription by RNA polymerase II"/>
    <property type="evidence" value="ECO:0000314"/>
    <property type="project" value="MGI"/>
</dbReference>
<dbReference type="FunFam" id="3.40.1000.10:FF:000003">
    <property type="entry name" value="hemojuvelin isoform X1"/>
    <property type="match status" value="1"/>
</dbReference>
<dbReference type="Gene3D" id="3.40.1000.10">
    <property type="entry name" value="Mog1/PsbP, alpha/beta/alpha sandwich"/>
    <property type="match status" value="1"/>
</dbReference>
<dbReference type="InterPro" id="IPR040287">
    <property type="entry name" value="RGM"/>
</dbReference>
<dbReference type="InterPro" id="IPR009496">
    <property type="entry name" value="RGM_C"/>
</dbReference>
<dbReference type="InterPro" id="IPR010536">
    <property type="entry name" value="RGM_N"/>
</dbReference>
<dbReference type="PANTHER" id="PTHR31428:SF3">
    <property type="entry name" value="HEMOJUVELIN"/>
    <property type="match status" value="1"/>
</dbReference>
<dbReference type="PANTHER" id="PTHR31428">
    <property type="entry name" value="RGM DOMAIN FAMILY MEMBER DRAG-1"/>
    <property type="match status" value="1"/>
</dbReference>
<dbReference type="Pfam" id="PF06534">
    <property type="entry name" value="RGM_C"/>
    <property type="match status" value="1"/>
</dbReference>
<dbReference type="Pfam" id="PF06535">
    <property type="entry name" value="RGM_N"/>
    <property type="match status" value="1"/>
</dbReference>
<comment type="function">
    <text evidence="6 7">Acts as a bone morphogenetic protein (BMP) coreceptor. Through enhancement of BMP signaling regulates hepcidin (HAMP) expression and regulates iron homeostasis.</text>
</comment>
<comment type="subunit">
    <text evidence="2 6">Interacts with BMP2 and BMP4 (PubMed:16604073). Interacts with BMP6 (PubMed:19252486). Interacts with BMPR1B (By similarity). Interacts with TMPRSS6 (By similarity).</text>
</comment>
<comment type="subcellular location">
    <subcellularLocation>
        <location evidence="1">Cell membrane</location>
        <topology evidence="1">Lipid-anchor</topology>
        <topology evidence="1">GPI-anchor</topology>
    </subcellularLocation>
    <text evidence="2">Also released in the extracellular space.</text>
</comment>
<comment type="alternative products">
    <event type="alternative splicing"/>
    <isoform>
        <id>Q7TQ32-1</id>
        <name>1</name>
        <sequence type="displayed"/>
    </isoform>
    <isoform>
        <id>Q7TQ32-2</id>
        <name>2</name>
        <sequence type="described" ref="VSP_011321"/>
    </isoform>
</comment>
<comment type="tissue specificity">
    <text evidence="5">Muscle cell lineage.</text>
</comment>
<comment type="developmental stage">
    <text evidence="5">Expressed at low levels in somite derived structures. In the developing eye, marked the ocular musculature. Expressed in all differentiating muscles of the limb and the body wall, but not in migrating muscle precursor cells. Not detected in the nervous system, either at 9.5 dpc or at any stage later during development.</text>
</comment>
<comment type="PTM">
    <text evidence="2">Autocatalytically cleaved at low pH; the two chains remain linked via two disulfide bonds. Also proteolytically processed by TMPRSS6, several fragments being released in the extracellular space; regulates HJV activity in BMP signaling and thefore iron homeostasis.</text>
</comment>
<comment type="similarity">
    <text evidence="10">Belongs to the repulsive guidance molecule (RGM) family.</text>
</comment>
<name>RGMC_MOUSE</name>
<protein>
    <recommendedName>
        <fullName evidence="10">Hemojuvelin</fullName>
    </recommendedName>
    <alternativeName>
        <fullName>Hemochromatosis type 2 protein homolog</fullName>
    </alternativeName>
    <alternativeName>
        <fullName evidence="10">Hemojuvelin BMP coreceptor</fullName>
    </alternativeName>
    <alternativeName>
        <fullName>RGM domain family member C</fullName>
    </alternativeName>
</protein>
<keyword id="KW-0025">Alternative splicing</keyword>
<keyword id="KW-0068">Autocatalytic cleavage</keyword>
<keyword id="KW-1003">Cell membrane</keyword>
<keyword id="KW-1015">Disulfide bond</keyword>
<keyword id="KW-0325">Glycoprotein</keyword>
<keyword id="KW-0336">GPI-anchor</keyword>
<keyword id="KW-0449">Lipoprotein</keyword>
<keyword id="KW-0472">Membrane</keyword>
<keyword id="KW-0597">Phosphoprotein</keyword>
<keyword id="KW-1185">Reference proteome</keyword>
<keyword id="KW-0732">Signal</keyword>
<feature type="signal peptide" evidence="3">
    <location>
        <begin position="1"/>
        <end position="32"/>
    </location>
</feature>
<feature type="chain" id="PRO_0000030400" description="Hemojuvelin">
    <location>
        <begin position="33"/>
        <end position="393"/>
    </location>
</feature>
<feature type="propeptide" id="PRO_0000030401" description="Removed in mature form" evidence="3">
    <location>
        <begin position="394"/>
        <end position="420"/>
    </location>
</feature>
<feature type="region of interest" description="Disordered" evidence="4">
    <location>
        <begin position="113"/>
        <end position="135"/>
    </location>
</feature>
<feature type="compositionally biased region" description="Low complexity" evidence="4">
    <location>
        <begin position="125"/>
        <end position="134"/>
    </location>
</feature>
<feature type="site" description="Cleavage; by autolysis" evidence="1">
    <location>
        <begin position="165"/>
        <end position="166"/>
    </location>
</feature>
<feature type="modified residue" description="Phosphotyrosine" evidence="11">
    <location>
        <position position="43"/>
    </location>
</feature>
<feature type="lipid moiety-binding region" description="GPI-anchor amidated aspartate" evidence="3">
    <location>
        <position position="393"/>
    </location>
</feature>
<feature type="glycosylation site" description="N-linked (GlcNAc...) asparagine" evidence="3">
    <location>
        <position position="111"/>
    </location>
</feature>
<feature type="glycosylation site" description="N-linked (GlcNAc...) asparagine" evidence="3">
    <location>
        <position position="206"/>
    </location>
</feature>
<feature type="glycosylation site" description="N-linked (GlcNAc...) asparagine" evidence="3">
    <location>
        <position position="365"/>
    </location>
</feature>
<feature type="disulfide bond" evidence="1">
    <location>
        <begin position="141"/>
        <end position="223"/>
    </location>
</feature>
<feature type="disulfide bond" evidence="1">
    <location>
        <begin position="160"/>
        <end position="310"/>
    </location>
</feature>
<feature type="splice variant" id="VSP_011321" description="In isoform 2." evidence="8 9">
    <location>
        <begin position="1"/>
        <end position="219"/>
    </location>
</feature>
<feature type="sequence conflict" description="In Ref. 2; BAC25423." evidence="10" ref="2">
    <original>G</original>
    <variation>W</variation>
    <location>
        <position position="264"/>
    </location>
</feature>
<feature type="sequence conflict" description="In Ref. 3; AAH22603." evidence="10" ref="3">
    <original>I</original>
    <variation>V</variation>
    <location>
        <position position="379"/>
    </location>
</feature>
<accession>Q7TQ32</accession>
<accession>Q8CEU7</accession>
<accession>Q8K1D4</accession>
<accession>Q9D741</accession>
<organism>
    <name type="scientific">Mus musculus</name>
    <name type="common">Mouse</name>
    <dbReference type="NCBI Taxonomy" id="10090"/>
    <lineage>
        <taxon>Eukaryota</taxon>
        <taxon>Metazoa</taxon>
        <taxon>Chordata</taxon>
        <taxon>Craniata</taxon>
        <taxon>Vertebrata</taxon>
        <taxon>Euteleostomi</taxon>
        <taxon>Mammalia</taxon>
        <taxon>Eutheria</taxon>
        <taxon>Euarchontoglires</taxon>
        <taxon>Glires</taxon>
        <taxon>Rodentia</taxon>
        <taxon>Myomorpha</taxon>
        <taxon>Muroidea</taxon>
        <taxon>Muridae</taxon>
        <taxon>Murinae</taxon>
        <taxon>Mus</taxon>
        <taxon>Mus</taxon>
    </lineage>
</organism>
<proteinExistence type="evidence at protein level"/>
<evidence type="ECO:0000250" key="1"/>
<evidence type="ECO:0000250" key="2">
    <source>
        <dbReference type="UniProtKB" id="Q6ZVN8"/>
    </source>
</evidence>
<evidence type="ECO:0000255" key="3"/>
<evidence type="ECO:0000256" key="4">
    <source>
        <dbReference type="SAM" id="MobiDB-lite"/>
    </source>
</evidence>
<evidence type="ECO:0000269" key="5">
    <source>
    </source>
</evidence>
<evidence type="ECO:0000269" key="6">
    <source>
    </source>
</evidence>
<evidence type="ECO:0000269" key="7">
    <source>
    </source>
</evidence>
<evidence type="ECO:0000303" key="8">
    <source>
    </source>
</evidence>
<evidence type="ECO:0000303" key="9">
    <source>
    </source>
</evidence>
<evidence type="ECO:0000305" key="10"/>
<evidence type="ECO:0007744" key="11">
    <source>
    </source>
</evidence>
<reference key="1">
    <citation type="journal article" date="2004" name="Gene Expr. Patterns">
        <title>Isolation and expression pattern of three mouse homologues of chick Rgm.</title>
        <authorList>
            <person name="Schmidtmer J."/>
            <person name="Engelkamp D."/>
        </authorList>
    </citation>
    <scope>NUCLEOTIDE SEQUENCE [MRNA] (ISOFORM 1)</scope>
    <scope>DEVELOPMENTAL STAGE</scope>
    <scope>TISSUE SPECIFICITY</scope>
</reference>
<reference key="2">
    <citation type="journal article" date="2005" name="Science">
        <title>The transcriptional landscape of the mammalian genome.</title>
        <authorList>
            <person name="Carninci P."/>
            <person name="Kasukawa T."/>
            <person name="Katayama S."/>
            <person name="Gough J."/>
            <person name="Frith M.C."/>
            <person name="Maeda N."/>
            <person name="Oyama R."/>
            <person name="Ravasi T."/>
            <person name="Lenhard B."/>
            <person name="Wells C."/>
            <person name="Kodzius R."/>
            <person name="Shimokawa K."/>
            <person name="Bajic V.B."/>
            <person name="Brenner S.E."/>
            <person name="Batalov S."/>
            <person name="Forrest A.R."/>
            <person name="Zavolan M."/>
            <person name="Davis M.J."/>
            <person name="Wilming L.G."/>
            <person name="Aidinis V."/>
            <person name="Allen J.E."/>
            <person name="Ambesi-Impiombato A."/>
            <person name="Apweiler R."/>
            <person name="Aturaliya R.N."/>
            <person name="Bailey T.L."/>
            <person name="Bansal M."/>
            <person name="Baxter L."/>
            <person name="Beisel K.W."/>
            <person name="Bersano T."/>
            <person name="Bono H."/>
            <person name="Chalk A.M."/>
            <person name="Chiu K.P."/>
            <person name="Choudhary V."/>
            <person name="Christoffels A."/>
            <person name="Clutterbuck D.R."/>
            <person name="Crowe M.L."/>
            <person name="Dalla E."/>
            <person name="Dalrymple B.P."/>
            <person name="de Bono B."/>
            <person name="Della Gatta G."/>
            <person name="di Bernardo D."/>
            <person name="Down T."/>
            <person name="Engstrom P."/>
            <person name="Fagiolini M."/>
            <person name="Faulkner G."/>
            <person name="Fletcher C.F."/>
            <person name="Fukushima T."/>
            <person name="Furuno M."/>
            <person name="Futaki S."/>
            <person name="Gariboldi M."/>
            <person name="Georgii-Hemming P."/>
            <person name="Gingeras T.R."/>
            <person name="Gojobori T."/>
            <person name="Green R.E."/>
            <person name="Gustincich S."/>
            <person name="Harbers M."/>
            <person name="Hayashi Y."/>
            <person name="Hensch T.K."/>
            <person name="Hirokawa N."/>
            <person name="Hill D."/>
            <person name="Huminiecki L."/>
            <person name="Iacono M."/>
            <person name="Ikeo K."/>
            <person name="Iwama A."/>
            <person name="Ishikawa T."/>
            <person name="Jakt M."/>
            <person name="Kanapin A."/>
            <person name="Katoh M."/>
            <person name="Kawasawa Y."/>
            <person name="Kelso J."/>
            <person name="Kitamura H."/>
            <person name="Kitano H."/>
            <person name="Kollias G."/>
            <person name="Krishnan S.P."/>
            <person name="Kruger A."/>
            <person name="Kummerfeld S.K."/>
            <person name="Kurochkin I.V."/>
            <person name="Lareau L.F."/>
            <person name="Lazarevic D."/>
            <person name="Lipovich L."/>
            <person name="Liu J."/>
            <person name="Liuni S."/>
            <person name="McWilliam S."/>
            <person name="Madan Babu M."/>
            <person name="Madera M."/>
            <person name="Marchionni L."/>
            <person name="Matsuda H."/>
            <person name="Matsuzawa S."/>
            <person name="Miki H."/>
            <person name="Mignone F."/>
            <person name="Miyake S."/>
            <person name="Morris K."/>
            <person name="Mottagui-Tabar S."/>
            <person name="Mulder N."/>
            <person name="Nakano N."/>
            <person name="Nakauchi H."/>
            <person name="Ng P."/>
            <person name="Nilsson R."/>
            <person name="Nishiguchi S."/>
            <person name="Nishikawa S."/>
            <person name="Nori F."/>
            <person name="Ohara O."/>
            <person name="Okazaki Y."/>
            <person name="Orlando V."/>
            <person name="Pang K.C."/>
            <person name="Pavan W.J."/>
            <person name="Pavesi G."/>
            <person name="Pesole G."/>
            <person name="Petrovsky N."/>
            <person name="Piazza S."/>
            <person name="Reed J."/>
            <person name="Reid J.F."/>
            <person name="Ring B.Z."/>
            <person name="Ringwald M."/>
            <person name="Rost B."/>
            <person name="Ruan Y."/>
            <person name="Salzberg S.L."/>
            <person name="Sandelin A."/>
            <person name="Schneider C."/>
            <person name="Schoenbach C."/>
            <person name="Sekiguchi K."/>
            <person name="Semple C.A."/>
            <person name="Seno S."/>
            <person name="Sessa L."/>
            <person name="Sheng Y."/>
            <person name="Shibata Y."/>
            <person name="Shimada H."/>
            <person name="Shimada K."/>
            <person name="Silva D."/>
            <person name="Sinclair B."/>
            <person name="Sperling S."/>
            <person name="Stupka E."/>
            <person name="Sugiura K."/>
            <person name="Sultana R."/>
            <person name="Takenaka Y."/>
            <person name="Taki K."/>
            <person name="Tammoja K."/>
            <person name="Tan S.L."/>
            <person name="Tang S."/>
            <person name="Taylor M.S."/>
            <person name="Tegner J."/>
            <person name="Teichmann S.A."/>
            <person name="Ueda H.R."/>
            <person name="van Nimwegen E."/>
            <person name="Verardo R."/>
            <person name="Wei C.L."/>
            <person name="Yagi K."/>
            <person name="Yamanishi H."/>
            <person name="Zabarovsky E."/>
            <person name="Zhu S."/>
            <person name="Zimmer A."/>
            <person name="Hide W."/>
            <person name="Bult C."/>
            <person name="Grimmond S.M."/>
            <person name="Teasdale R.D."/>
            <person name="Liu E.T."/>
            <person name="Brusic V."/>
            <person name="Quackenbush J."/>
            <person name="Wahlestedt C."/>
            <person name="Mattick J.S."/>
            <person name="Hume D.A."/>
            <person name="Kai C."/>
            <person name="Sasaki D."/>
            <person name="Tomaru Y."/>
            <person name="Fukuda S."/>
            <person name="Kanamori-Katayama M."/>
            <person name="Suzuki M."/>
            <person name="Aoki J."/>
            <person name="Arakawa T."/>
            <person name="Iida J."/>
            <person name="Imamura K."/>
            <person name="Itoh M."/>
            <person name="Kato T."/>
            <person name="Kawaji H."/>
            <person name="Kawagashira N."/>
            <person name="Kawashima T."/>
            <person name="Kojima M."/>
            <person name="Kondo S."/>
            <person name="Konno H."/>
            <person name="Nakano K."/>
            <person name="Ninomiya N."/>
            <person name="Nishio T."/>
            <person name="Okada M."/>
            <person name="Plessy C."/>
            <person name="Shibata K."/>
            <person name="Shiraki T."/>
            <person name="Suzuki S."/>
            <person name="Tagami M."/>
            <person name="Waki K."/>
            <person name="Watahiki A."/>
            <person name="Okamura-Oho Y."/>
            <person name="Suzuki H."/>
            <person name="Kawai J."/>
            <person name="Hayashizaki Y."/>
        </authorList>
    </citation>
    <scope>NUCLEOTIDE SEQUENCE [LARGE SCALE MRNA] (ISOFORM 2)</scope>
    <source>
        <strain>C57BL/6J</strain>
        <tissue>Head</tissue>
        <tissue>Tongue</tissue>
    </source>
</reference>
<reference key="3">
    <citation type="journal article" date="2004" name="Genome Res.">
        <title>The status, quality, and expansion of the NIH full-length cDNA project: the Mammalian Gene Collection (MGC).</title>
        <authorList>
            <consortium name="The MGC Project Team"/>
        </authorList>
    </citation>
    <scope>NUCLEOTIDE SEQUENCE [LARGE SCALE MRNA] (ISOFORM 2)</scope>
    <source>
        <strain>FVB/N</strain>
        <tissue>Liver</tissue>
    </source>
</reference>
<reference key="4">
    <citation type="journal article" date="2006" name="Nat. Genet.">
        <title>Bone morphogenetic protein signaling by hemojuvelin regulates hepcidin expression.</title>
        <authorList>
            <person name="Babitt J.L."/>
            <person name="Huang F.W."/>
            <person name="Wrighting D.M."/>
            <person name="Xia Y."/>
            <person name="Sidis Y."/>
            <person name="Samad T.A."/>
            <person name="Campagna J.A."/>
            <person name="Chung R.T."/>
            <person name="Schneyer A.L."/>
            <person name="Woolf C.J."/>
            <person name="Andrews N.C."/>
            <person name="Lin H.Y."/>
        </authorList>
    </citation>
    <scope>FUNCTION</scope>
    <scope>INTERACTION WITH BMP2 AND BMP4</scope>
</reference>
<reference key="5">
    <citation type="journal article" date="2009" name="Nat. Genet.">
        <title>BMP6 is a key endogenous regulator of hepcidin expression and iron metabolism.</title>
        <authorList>
            <person name="Andriopoulos B. Jr."/>
            <person name="Corradini E."/>
            <person name="Xia Y."/>
            <person name="Faasse S.A."/>
            <person name="Chen S."/>
            <person name="Grgurevic L."/>
            <person name="Knutson M.D."/>
            <person name="Pietrangelo A."/>
            <person name="Vukicevic S."/>
            <person name="Lin H.Y."/>
            <person name="Babitt J.L."/>
        </authorList>
    </citation>
    <scope>FUNCTION</scope>
    <scope>INTERACTION WITH BMP6</scope>
</reference>
<reference key="6">
    <citation type="journal article" date="2010" name="Cell">
        <title>A tissue-specific atlas of mouse protein phosphorylation and expression.</title>
        <authorList>
            <person name="Huttlin E.L."/>
            <person name="Jedrychowski M.P."/>
            <person name="Elias J.E."/>
            <person name="Goswami T."/>
            <person name="Rad R."/>
            <person name="Beausoleil S.A."/>
            <person name="Villen J."/>
            <person name="Haas W."/>
            <person name="Sowa M.E."/>
            <person name="Gygi S.P."/>
        </authorList>
    </citation>
    <scope>PHOSPHORYLATION [LARGE SCALE ANALYSIS] AT TYR-43</scope>
    <scope>IDENTIFICATION BY MASS SPECTROMETRY [LARGE SCALE ANALYSIS]</scope>
    <source>
        <tissue>Brown adipose tissue</tissue>
    </source>
</reference>
<gene>
    <name evidence="2" type="primary">Hjv</name>
    <name type="synonym">Hfe2</name>
    <name type="synonym">Rgmc</name>
</gene>